<dbReference type="EMBL" id="CP000678">
    <property type="protein sequence ID" value="ABQ86967.1"/>
    <property type="molecule type" value="Genomic_DNA"/>
</dbReference>
<dbReference type="SMR" id="A5UL89"/>
<dbReference type="STRING" id="420247.Msm_0762"/>
<dbReference type="EnsemblBacteria" id="ABQ86967">
    <property type="protein sequence ID" value="ABQ86967"/>
    <property type="gene ID" value="Msm_0762"/>
</dbReference>
<dbReference type="KEGG" id="msi:Msm_0762"/>
<dbReference type="PATRIC" id="fig|420247.28.peg.759"/>
<dbReference type="eggNOG" id="arCOG04070">
    <property type="taxonomic scope" value="Archaea"/>
</dbReference>
<dbReference type="HOGENOM" id="CLU_033361_2_0_2"/>
<dbReference type="Proteomes" id="UP000001992">
    <property type="component" value="Chromosome"/>
</dbReference>
<dbReference type="GO" id="GO:0022625">
    <property type="term" value="C:cytosolic large ribosomal subunit"/>
    <property type="evidence" value="ECO:0007669"/>
    <property type="project" value="TreeGrafter"/>
</dbReference>
<dbReference type="GO" id="GO:0019843">
    <property type="term" value="F:rRNA binding"/>
    <property type="evidence" value="ECO:0007669"/>
    <property type="project" value="UniProtKB-UniRule"/>
</dbReference>
<dbReference type="GO" id="GO:0003735">
    <property type="term" value="F:structural constituent of ribosome"/>
    <property type="evidence" value="ECO:0007669"/>
    <property type="project" value="InterPro"/>
</dbReference>
<dbReference type="GO" id="GO:0006412">
    <property type="term" value="P:translation"/>
    <property type="evidence" value="ECO:0007669"/>
    <property type="project" value="UniProtKB-UniRule"/>
</dbReference>
<dbReference type="Gene3D" id="3.30.1430.10">
    <property type="match status" value="1"/>
</dbReference>
<dbReference type="Gene3D" id="4.10.960.10">
    <property type="entry name" value="Ribosomal protein L3, domain 3"/>
    <property type="match status" value="1"/>
</dbReference>
<dbReference type="Gene3D" id="2.40.30.10">
    <property type="entry name" value="Translation factors"/>
    <property type="match status" value="1"/>
</dbReference>
<dbReference type="HAMAP" id="MF_01325_A">
    <property type="entry name" value="Ribosomal_uL3_A"/>
    <property type="match status" value="1"/>
</dbReference>
<dbReference type="InterPro" id="IPR045077">
    <property type="entry name" value="L3_arc_euk"/>
</dbReference>
<dbReference type="InterPro" id="IPR044892">
    <property type="entry name" value="Ribosomal_L3_dom_3_arc_sf"/>
</dbReference>
<dbReference type="InterPro" id="IPR000597">
    <property type="entry name" value="Ribosomal_uL3"/>
</dbReference>
<dbReference type="InterPro" id="IPR019928">
    <property type="entry name" value="Ribosomal_uL3_arc"/>
</dbReference>
<dbReference type="InterPro" id="IPR019926">
    <property type="entry name" value="Ribosomal_uL3_CS"/>
</dbReference>
<dbReference type="InterPro" id="IPR009000">
    <property type="entry name" value="Transl_B-barrel_sf"/>
</dbReference>
<dbReference type="NCBIfam" id="TIGR03626">
    <property type="entry name" value="L3_arch"/>
    <property type="match status" value="1"/>
</dbReference>
<dbReference type="NCBIfam" id="NF003261">
    <property type="entry name" value="PRK04231.1"/>
    <property type="match status" value="1"/>
</dbReference>
<dbReference type="PANTHER" id="PTHR11363">
    <property type="entry name" value="60S RIBOSOMAL PROTEIN L3-RELATED"/>
    <property type="match status" value="1"/>
</dbReference>
<dbReference type="PANTHER" id="PTHR11363:SF5">
    <property type="entry name" value="LARGE RIBOSOMAL SUBUNIT PROTEIN UL3"/>
    <property type="match status" value="1"/>
</dbReference>
<dbReference type="Pfam" id="PF00297">
    <property type="entry name" value="Ribosomal_L3"/>
    <property type="match status" value="1"/>
</dbReference>
<dbReference type="SUPFAM" id="SSF50447">
    <property type="entry name" value="Translation proteins"/>
    <property type="match status" value="1"/>
</dbReference>
<dbReference type="PROSITE" id="PS00474">
    <property type="entry name" value="RIBOSOMAL_L3"/>
    <property type="match status" value="1"/>
</dbReference>
<name>RL3_METS3</name>
<comment type="function">
    <text evidence="1">One of the primary rRNA binding proteins, it binds directly near the 3'-end of the 23S rRNA, where it nucleates assembly of the 50S subunit.</text>
</comment>
<comment type="subunit">
    <text evidence="1">Part of the 50S ribosomal subunit. Forms a cluster with proteins L14 and L24e.</text>
</comment>
<comment type="similarity">
    <text evidence="1">Belongs to the universal ribosomal protein uL3 family.</text>
</comment>
<proteinExistence type="inferred from homology"/>
<keyword id="KW-0687">Ribonucleoprotein</keyword>
<keyword id="KW-0689">Ribosomal protein</keyword>
<keyword id="KW-0694">RNA-binding</keyword>
<keyword id="KW-0699">rRNA-binding</keyword>
<evidence type="ECO:0000255" key="1">
    <source>
        <dbReference type="HAMAP-Rule" id="MF_01325"/>
    </source>
</evidence>
<evidence type="ECO:0000256" key="2">
    <source>
        <dbReference type="SAM" id="MobiDB-lite"/>
    </source>
</evidence>
<evidence type="ECO:0000305" key="3"/>
<gene>
    <name evidence="1" type="primary">rpl3</name>
    <name type="ordered locus">Msm_0762</name>
</gene>
<feature type="chain" id="PRO_1000052083" description="Large ribosomal subunit protein uL3">
    <location>
        <begin position="1"/>
        <end position="336"/>
    </location>
</feature>
<feature type="region of interest" description="Disordered" evidence="2">
    <location>
        <begin position="1"/>
        <end position="34"/>
    </location>
</feature>
<protein>
    <recommendedName>
        <fullName evidence="1">Large ribosomal subunit protein uL3</fullName>
    </recommendedName>
    <alternativeName>
        <fullName evidence="3">50S ribosomal protein L3</fullName>
    </alternativeName>
</protein>
<organism>
    <name type="scientific">Methanobrevibacter smithii (strain ATCC 35061 / DSM 861 / OCM 144 / PS)</name>
    <dbReference type="NCBI Taxonomy" id="420247"/>
    <lineage>
        <taxon>Archaea</taxon>
        <taxon>Methanobacteriati</taxon>
        <taxon>Methanobacteriota</taxon>
        <taxon>Methanomada group</taxon>
        <taxon>Methanobacteria</taxon>
        <taxon>Methanobacteriales</taxon>
        <taxon>Methanobacteriaceae</taxon>
        <taxon>Methanobrevibacter</taxon>
    </lineage>
</organism>
<accession>A5UL89</accession>
<reference key="1">
    <citation type="journal article" date="2007" name="Proc. Natl. Acad. Sci. U.S.A.">
        <title>Genomic and metabolic adaptations of Methanobrevibacter smithii to the human gut.</title>
        <authorList>
            <person name="Samuel B.S."/>
            <person name="Hansen E.E."/>
            <person name="Manchester J.K."/>
            <person name="Coutinho P.M."/>
            <person name="Henrissat B."/>
            <person name="Fulton R."/>
            <person name="Latreille P."/>
            <person name="Kim K."/>
            <person name="Wilson R.K."/>
            <person name="Gordon J.I."/>
        </authorList>
    </citation>
    <scope>NUCLEOTIDE SEQUENCE [LARGE SCALE GENOMIC DNA]</scope>
    <source>
        <strain>ATCC 35061 / DSM 861 / OCM 144 / PS</strain>
    </source>
</reference>
<sequence>MVRHHQPRKGSVAFSPRKRAAKETPRIKSWPQNDEPKLLGLAGYKVGMTHALVTDSDKNSPTNGMDVFTPVTVLEVPPVVVMGIRAYEKTSRGLKVITEVLADNLDEELSRKISLPKEYNKSEAIAKIQGVLDKTEDIKVLVHTNPKVTSVPKKKPDIFECGIGGANPEEKLNTALELLGNEVKASDILNEGQFVDAIATTKGKGFQGVVKRWGIRIQYGKAVRAGKGRHVGSIGPWTPSRTMWTVAQAGQMGYHKRTEFNKKILKIASADEVDQINPDGGFVKYGLVKNDYVLVKGSLPGPSKRLVILRQPIRPNNKSEDMPQINYISTKSKQGV</sequence>